<sequence length="128" mass="14230">MHLPPQAAGPYRSRFSYNTQTQPPEKPRSSAELKPQSPSLITEKRPRPGPKGRNRVAFNYECCNYFIIAVSLLAGSSQYTLVSGPDGPLTRRYAPTSGKPSSGPLRPRTEALSWLKAGMVWQGWGWVR</sequence>
<accession>P03848</accession>
<feature type="chain" id="PRO_0000068536" description="Uncharacterized protein repA4">
    <location>
        <begin position="1"/>
        <end position="128"/>
    </location>
</feature>
<feature type="region of interest" description="Disordered" evidence="1">
    <location>
        <begin position="1"/>
        <end position="53"/>
    </location>
</feature>
<feature type="region of interest" description="Disordered" evidence="1">
    <location>
        <begin position="85"/>
        <end position="105"/>
    </location>
</feature>
<gene>
    <name type="primary">repA4</name>
</gene>
<keyword id="KW-0614">Plasmid</keyword>
<dbReference type="EMBL" id="J01762">
    <property type="status" value="NOT_ANNOTATED_CDS"/>
    <property type="molecule type" value="Genomic_DNA"/>
</dbReference>
<dbReference type="EMBL" id="V00325">
    <property type="protein sequence ID" value="CAA23616.1"/>
    <property type="molecule type" value="Genomic_DNA"/>
</dbReference>
<dbReference type="EMBL" id="M26840">
    <property type="protein sequence ID" value="AAA26068.1"/>
    <property type="molecule type" value="Genomic_DNA"/>
</dbReference>
<dbReference type="PIR" id="A04477">
    <property type="entry name" value="QQECBR"/>
</dbReference>
<dbReference type="RefSeq" id="YP_001096512.1">
    <property type="nucleotide sequence ID" value="NC_009133.1"/>
</dbReference>
<dbReference type="InterPro" id="IPR016422">
    <property type="entry name" value="Rep_assoc_RepA4"/>
</dbReference>
<dbReference type="PIRSF" id="PIRSF004574">
    <property type="entry name" value="Rep_assoc_RepA4"/>
    <property type="match status" value="1"/>
</dbReference>
<organism>
    <name type="scientific">Escherichia coli</name>
    <dbReference type="NCBI Taxonomy" id="562"/>
    <lineage>
        <taxon>Bacteria</taxon>
        <taxon>Pseudomonadati</taxon>
        <taxon>Pseudomonadota</taxon>
        <taxon>Gammaproteobacteria</taxon>
        <taxon>Enterobacterales</taxon>
        <taxon>Enterobacteriaceae</taxon>
        <taxon>Escherichia</taxon>
    </lineage>
</organism>
<proteinExistence type="predicted"/>
<reference key="1">
    <citation type="journal article" date="1980" name="Mol. Gen. Genet.">
        <title>Genes and sites involved in replication and incompatibility of an R100 plasmid derivative based on nucleotide sequence analysis.</title>
        <authorList>
            <person name="Rosen J."/>
            <person name="Ryder T."/>
            <person name="Inokuchi H."/>
            <person name="Ohtsubo H."/>
            <person name="Ohtsubo E."/>
        </authorList>
    </citation>
    <scope>NUCLEOTIDE SEQUENCE [GENOMIC DNA]</scope>
    <source>
        <plasmid>IncFII R100 (NR1)</plasmid>
    </source>
</reference>
<reference key="2">
    <citation type="journal article" date="1979" name="Mol. Gen. Genet.">
        <title>The nucleotide sequence of the region surrounding the replication origin of an R100 resistance factor derivative.</title>
        <authorList>
            <person name="Rosen J.I."/>
            <person name="Ohtsubo H."/>
            <person name="Ohtsubo E."/>
        </authorList>
    </citation>
    <scope>NUCLEOTIDE SEQUENCE [GENOMIC DNA]</scope>
    <source>
        <plasmid>IncFII R100 (NR1)</plasmid>
    </source>
</reference>
<reference key="3">
    <citation type="journal article" date="1981" name="Nature">
        <title>Role of RNA transcripts in replication incompatibility and copy number control in antibiotic resistance plasmid derivatives.</title>
        <authorList>
            <person name="Rosen J."/>
            <person name="Ryder T."/>
            <person name="Ohtsubo H."/>
            <person name="Ohtsubo E."/>
        </authorList>
    </citation>
    <scope>NUCLEOTIDE SEQUENCE [GENOMIC DNA]</scope>
    <source>
        <plasmid>IncFII R1</plasmid>
        <plasmid>IncFII R100 (NR1)</plasmid>
    </source>
</reference>
<reference key="4">
    <citation type="journal article" date="1986" name="Adv. Biophys.">
        <title>DNA replication of the resistance plasmid R100 and its control.</title>
        <authorList>
            <person name="Ohtsubo H."/>
            <person name="Ryder T.B."/>
            <person name="Maeda Y."/>
            <person name="Armstrong K."/>
            <person name="Ohtsubo E."/>
        </authorList>
    </citation>
    <scope>NUCLEOTIDE SEQUENCE [GENOMIC DNA]</scope>
    <source>
        <plasmid>IncFII R100 (NR1)</plasmid>
    </source>
</reference>
<reference key="5">
    <citation type="journal article" date="1993" name="J. Bacteriol.">
        <title>Insertion and deletion mutations in the repA4 region of the IncFII plasmid NR1 cause unstable inheritance.</title>
        <authorList>
            <person name="Jiang T."/>
            <person name="Min Y.-N."/>
            <person name="Liu W."/>
            <person name="Womble D.D."/>
            <person name="Rownd R.H."/>
        </authorList>
    </citation>
    <scope>NUCLEOTIDE SEQUENCE [GENOMIC DNA]</scope>
    <source>
        <plasmid>IncFII R100 (NR1)</plasmid>
    </source>
</reference>
<geneLocation type="plasmid">
    <name>IncFII R100</name>
    <name>NR1</name>
</geneLocation>
<geneLocation type="plasmid">
    <name>IncFII R1</name>
</geneLocation>
<name>YPRR_ECOLX</name>
<protein>
    <recommendedName>
        <fullName>Uncharacterized protein repA4</fullName>
    </recommendedName>
</protein>
<evidence type="ECO:0000256" key="1">
    <source>
        <dbReference type="SAM" id="MobiDB-lite"/>
    </source>
</evidence>